<feature type="chain" id="PRO_0000052743" description="Hemoglobin subunit alpha">
    <location>
        <begin position="1"/>
        <end position="141"/>
    </location>
</feature>
<feature type="peptide" id="PRO_0000455933" description="Hemopressin" evidence="2">
    <location>
        <begin position="95"/>
        <end position="103"/>
    </location>
</feature>
<feature type="domain" description="Globin" evidence="4">
    <location>
        <begin position="1"/>
        <end position="141"/>
    </location>
</feature>
<feature type="binding site" evidence="4">
    <location>
        <position position="58"/>
    </location>
    <ligand>
        <name>O2</name>
        <dbReference type="ChEBI" id="CHEBI:15379"/>
    </ligand>
</feature>
<feature type="binding site" description="proximal binding residue" evidence="4">
    <location>
        <position position="87"/>
    </location>
    <ligand>
        <name>heme b</name>
        <dbReference type="ChEBI" id="CHEBI:60344"/>
    </ligand>
    <ligandPart>
        <name>Fe</name>
        <dbReference type="ChEBI" id="CHEBI:18248"/>
    </ligandPart>
</feature>
<feature type="modified residue" description="Phosphoserine" evidence="3">
    <location>
        <position position="3"/>
    </location>
</feature>
<feature type="modified residue" description="N6-succinyllysine" evidence="1">
    <location>
        <position position="7"/>
    </location>
</feature>
<feature type="modified residue" description="N6-succinyllysine" evidence="1">
    <location>
        <position position="11"/>
    </location>
</feature>
<feature type="modified residue" description="N6-acetyllysine; alternate" evidence="3">
    <location>
        <position position="16"/>
    </location>
</feature>
<feature type="modified residue" description="N6-succinyllysine; alternate" evidence="1">
    <location>
        <position position="16"/>
    </location>
</feature>
<feature type="modified residue" description="Phosphotyrosine" evidence="3">
    <location>
        <position position="24"/>
    </location>
</feature>
<feature type="modified residue" description="Phosphoserine" evidence="3">
    <location>
        <position position="35"/>
    </location>
</feature>
<feature type="modified residue" description="N6-succinyllysine" evidence="1">
    <location>
        <position position="40"/>
    </location>
</feature>
<feature type="modified residue" description="Phosphoserine" evidence="1">
    <location>
        <position position="102"/>
    </location>
</feature>
<feature type="modified residue" description="Phosphothreonine" evidence="1">
    <location>
        <position position="108"/>
    </location>
</feature>
<feature type="modified residue" description="Phosphoserine" evidence="1">
    <location>
        <position position="124"/>
    </location>
</feature>
<feature type="modified residue" description="Phosphoserine" evidence="1">
    <location>
        <position position="131"/>
    </location>
</feature>
<feature type="modified residue" description="Phosphothreonine" evidence="1">
    <location>
        <position position="134"/>
    </location>
</feature>
<feature type="modified residue" description="Phosphothreonine" evidence="1">
    <location>
        <position position="137"/>
    </location>
</feature>
<feature type="modified residue" description="Phosphoserine" evidence="1">
    <location>
        <position position="138"/>
    </location>
</feature>
<feature type="sequence variant">
    <original>S</original>
    <variation>T</variation>
    <location>
        <position position="115"/>
    </location>
</feature>
<evidence type="ECO:0000250" key="1">
    <source>
        <dbReference type="UniProtKB" id="P01942"/>
    </source>
</evidence>
<evidence type="ECO:0000250" key="2">
    <source>
        <dbReference type="UniProtKB" id="P01946"/>
    </source>
</evidence>
<evidence type="ECO:0000250" key="3">
    <source>
        <dbReference type="UniProtKB" id="P69905"/>
    </source>
</evidence>
<evidence type="ECO:0000255" key="4">
    <source>
        <dbReference type="PROSITE-ProRule" id="PRU00238"/>
    </source>
</evidence>
<proteinExistence type="evidence at protein level"/>
<keyword id="KW-0007">Acetylation</keyword>
<keyword id="KW-0903">Direct protein sequencing</keyword>
<keyword id="KW-0349">Heme</keyword>
<keyword id="KW-0408">Iron</keyword>
<keyword id="KW-0479">Metal-binding</keyword>
<keyword id="KW-0561">Oxygen transport</keyword>
<keyword id="KW-0597">Phosphoprotein</keyword>
<keyword id="KW-0813">Transport</keyword>
<accession>P14389</accession>
<reference key="1">
    <citation type="journal article" date="1988" name="Biol. Chem. Hoppe-Seyler">
        <title>The primary structure of the hemoglobin from the grey-headed flying fox (Pteropus poliocephalus) and the black flying fox (P. alecto, Megachiroptera).</title>
        <authorList>
            <person name="Kleinschmidt T."/>
            <person name="Sgouros J.G."/>
            <person name="Pettigrew J.D."/>
            <person name="Braunitzer G."/>
        </authorList>
    </citation>
    <scope>PROTEIN SEQUENCE</scope>
</reference>
<protein>
    <recommendedName>
        <fullName>Hemoglobin subunit alpha</fullName>
    </recommendedName>
    <alternativeName>
        <fullName>Alpha-globin</fullName>
    </alternativeName>
    <alternativeName>
        <fullName>Hemoglobin alpha chain</fullName>
    </alternativeName>
    <component>
        <recommendedName>
            <fullName evidence="2">Hemopressin</fullName>
        </recommendedName>
    </component>
</protein>
<dbReference type="PIR" id="S01308">
    <property type="entry name" value="HAFXB"/>
</dbReference>
<dbReference type="SMR" id="P14389"/>
<dbReference type="eggNOG" id="KOG3378">
    <property type="taxonomic scope" value="Eukaryota"/>
</dbReference>
<dbReference type="GO" id="GO:0072562">
    <property type="term" value="C:blood microparticle"/>
    <property type="evidence" value="ECO:0007669"/>
    <property type="project" value="TreeGrafter"/>
</dbReference>
<dbReference type="GO" id="GO:0031838">
    <property type="term" value="C:haptoglobin-hemoglobin complex"/>
    <property type="evidence" value="ECO:0007669"/>
    <property type="project" value="TreeGrafter"/>
</dbReference>
<dbReference type="GO" id="GO:0005833">
    <property type="term" value="C:hemoglobin complex"/>
    <property type="evidence" value="ECO:0007669"/>
    <property type="project" value="InterPro"/>
</dbReference>
<dbReference type="GO" id="GO:0031720">
    <property type="term" value="F:haptoglobin binding"/>
    <property type="evidence" value="ECO:0007669"/>
    <property type="project" value="TreeGrafter"/>
</dbReference>
<dbReference type="GO" id="GO:0020037">
    <property type="term" value="F:heme binding"/>
    <property type="evidence" value="ECO:0007669"/>
    <property type="project" value="InterPro"/>
</dbReference>
<dbReference type="GO" id="GO:0005506">
    <property type="term" value="F:iron ion binding"/>
    <property type="evidence" value="ECO:0007669"/>
    <property type="project" value="InterPro"/>
</dbReference>
<dbReference type="GO" id="GO:0043177">
    <property type="term" value="F:organic acid binding"/>
    <property type="evidence" value="ECO:0007669"/>
    <property type="project" value="TreeGrafter"/>
</dbReference>
<dbReference type="GO" id="GO:0019825">
    <property type="term" value="F:oxygen binding"/>
    <property type="evidence" value="ECO:0007669"/>
    <property type="project" value="InterPro"/>
</dbReference>
<dbReference type="GO" id="GO:0005344">
    <property type="term" value="F:oxygen carrier activity"/>
    <property type="evidence" value="ECO:0007669"/>
    <property type="project" value="UniProtKB-KW"/>
</dbReference>
<dbReference type="GO" id="GO:0004601">
    <property type="term" value="F:peroxidase activity"/>
    <property type="evidence" value="ECO:0007669"/>
    <property type="project" value="TreeGrafter"/>
</dbReference>
<dbReference type="GO" id="GO:0042744">
    <property type="term" value="P:hydrogen peroxide catabolic process"/>
    <property type="evidence" value="ECO:0007669"/>
    <property type="project" value="TreeGrafter"/>
</dbReference>
<dbReference type="CDD" id="cd08927">
    <property type="entry name" value="Hb-alpha-like"/>
    <property type="match status" value="1"/>
</dbReference>
<dbReference type="FunFam" id="1.10.490.10:FF:000002">
    <property type="entry name" value="Hemoglobin subunit alpha"/>
    <property type="match status" value="1"/>
</dbReference>
<dbReference type="Gene3D" id="1.10.490.10">
    <property type="entry name" value="Globins"/>
    <property type="match status" value="1"/>
</dbReference>
<dbReference type="InterPro" id="IPR000971">
    <property type="entry name" value="Globin"/>
</dbReference>
<dbReference type="InterPro" id="IPR009050">
    <property type="entry name" value="Globin-like_sf"/>
</dbReference>
<dbReference type="InterPro" id="IPR012292">
    <property type="entry name" value="Globin/Proto"/>
</dbReference>
<dbReference type="InterPro" id="IPR002338">
    <property type="entry name" value="Hemoglobin_a-typ"/>
</dbReference>
<dbReference type="InterPro" id="IPR050056">
    <property type="entry name" value="Hemoglobin_oxygen_transport"/>
</dbReference>
<dbReference type="InterPro" id="IPR002339">
    <property type="entry name" value="Hemoglobin_pi"/>
</dbReference>
<dbReference type="PANTHER" id="PTHR11442">
    <property type="entry name" value="HEMOGLOBIN FAMILY MEMBER"/>
    <property type="match status" value="1"/>
</dbReference>
<dbReference type="PANTHER" id="PTHR11442:SF48">
    <property type="entry name" value="HEMOGLOBIN SUBUNIT ALPHA"/>
    <property type="match status" value="1"/>
</dbReference>
<dbReference type="Pfam" id="PF00042">
    <property type="entry name" value="Globin"/>
    <property type="match status" value="1"/>
</dbReference>
<dbReference type="PRINTS" id="PR00612">
    <property type="entry name" value="ALPHAHAEM"/>
</dbReference>
<dbReference type="PRINTS" id="PR00815">
    <property type="entry name" value="PIHAEM"/>
</dbReference>
<dbReference type="SUPFAM" id="SSF46458">
    <property type="entry name" value="Globin-like"/>
    <property type="match status" value="1"/>
</dbReference>
<dbReference type="PROSITE" id="PS01033">
    <property type="entry name" value="GLOBIN"/>
    <property type="match status" value="1"/>
</dbReference>
<organism>
    <name type="scientific">Pteropus alecto</name>
    <name type="common">Black flying fox</name>
    <dbReference type="NCBI Taxonomy" id="9402"/>
    <lineage>
        <taxon>Eukaryota</taxon>
        <taxon>Metazoa</taxon>
        <taxon>Chordata</taxon>
        <taxon>Craniata</taxon>
        <taxon>Vertebrata</taxon>
        <taxon>Euteleostomi</taxon>
        <taxon>Mammalia</taxon>
        <taxon>Eutheria</taxon>
        <taxon>Laurasiatheria</taxon>
        <taxon>Chiroptera</taxon>
        <taxon>Yinpterochiroptera</taxon>
        <taxon>Pteropodoidea</taxon>
        <taxon>Pteropodidae</taxon>
        <taxon>Pteropodinae</taxon>
        <taxon>Pteropus</taxon>
    </lineage>
</organism>
<sequence length="141" mass="15173">VLSSTDKSNVKAAWDKVGGHVGEYGAEALERMFLSFPTTKTYFPHFDLAHGSSQVKAHGKKVGDALTNAVGHIDDLPGALSALSDLHAYKLRVDPVNFKLLSHCLLVTLASHLPSDFTPAVHASLDKFLASVSTVLTSKYR</sequence>
<gene>
    <name type="primary">HBA</name>
</gene>
<name>HBA_PTEAL</name>
<comment type="function">
    <text>Involved in oxygen transport from the lung to the various peripheral tissues.</text>
</comment>
<comment type="function">
    <molecule>Hemopressin</molecule>
    <text evidence="2">Hemopressin acts as an antagonist peptide of the cannabinoid receptor CNR1. Hemopressin-binding efficiently blocks cannabinoid receptor CNR1 and subsequent signaling.</text>
</comment>
<comment type="subunit">
    <text>Heterotetramer of two alpha chains and two beta chains.</text>
</comment>
<comment type="tissue specificity">
    <text>Red blood cells.</text>
</comment>
<comment type="similarity">
    <text evidence="4">Belongs to the globin family.</text>
</comment>